<sequence>MTKNVLVSVAWPYANGPRHIGHVAGFGVPSDVFARFQRMSGNNVLMVSGTDEHGTPLLVQADKEGVTVQDLADKYNRQIVEDLTGLGLSYDLFTRTTTSNHYAVVQELFRGLYDNGYMIKETTLGAISPSTGRTLPDRYIEGTCPICGTDGARGDQCDNCGNQLDPADLINPVSKINGETPEFVETEHFLLDLPALAEALTEWLKGREDWRPNVLKFSLNLLDDIRPRAMSRDIDWGIPIPVEGWQDNNAKKLYVWFDAVVGYLSASIEWAYRSGDPEAWRTFWNDPETKSYYFMGKDNITFHSQIWPAELLGYAGKGSRGGEIGDLGVLNLPTEVVSSEFLTMSGSKFSSSKGVVIYVKDFLKEFGPDALRYFIAVAGPENNDTDFTWDEFVRRVNNELANGWGNLVNRTVSMAHKNFGEVPVPGALEESDKKILDLATAAFESVAANLDQSKFKAGISEIMHVVGEANAYIAEQEPWKLAKDDTKRERLATVLWTALQVVSDCNTMLTPYLPHTAQKVHETLGRDGIWAASPQIVEVTNESPRQPIGVGLPDPEHTYPVIMGDYKTQLAKWQRIDVVPGTTLEKPAPLIAKLDPELGETGPEWAPVQN</sequence>
<organism>
    <name type="scientific">Corynebacterium glutamicum (strain R)</name>
    <dbReference type="NCBI Taxonomy" id="340322"/>
    <lineage>
        <taxon>Bacteria</taxon>
        <taxon>Bacillati</taxon>
        <taxon>Actinomycetota</taxon>
        <taxon>Actinomycetes</taxon>
        <taxon>Mycobacteriales</taxon>
        <taxon>Corynebacteriaceae</taxon>
        <taxon>Corynebacterium</taxon>
    </lineage>
</organism>
<accession>A4QCN5</accession>
<evidence type="ECO:0000255" key="1">
    <source>
        <dbReference type="HAMAP-Rule" id="MF_00098"/>
    </source>
</evidence>
<keyword id="KW-0030">Aminoacyl-tRNA synthetase</keyword>
<keyword id="KW-0067">ATP-binding</keyword>
<keyword id="KW-0963">Cytoplasm</keyword>
<keyword id="KW-0436">Ligase</keyword>
<keyword id="KW-0479">Metal-binding</keyword>
<keyword id="KW-0547">Nucleotide-binding</keyword>
<keyword id="KW-0648">Protein biosynthesis</keyword>
<keyword id="KW-0862">Zinc</keyword>
<gene>
    <name evidence="1" type="primary">metG</name>
    <name type="ordered locus">cgR_1006</name>
</gene>
<protein>
    <recommendedName>
        <fullName evidence="1">Methionine--tRNA ligase</fullName>
        <ecNumber evidence="1">6.1.1.10</ecNumber>
    </recommendedName>
    <alternativeName>
        <fullName evidence="1">Methionyl-tRNA synthetase</fullName>
        <shortName evidence="1">MetRS</shortName>
    </alternativeName>
</protein>
<comment type="function">
    <text evidence="1">Is required not only for elongation of protein synthesis but also for the initiation of all mRNA translation through initiator tRNA(fMet) aminoacylation.</text>
</comment>
<comment type="catalytic activity">
    <reaction evidence="1">
        <text>tRNA(Met) + L-methionine + ATP = L-methionyl-tRNA(Met) + AMP + diphosphate</text>
        <dbReference type="Rhea" id="RHEA:13481"/>
        <dbReference type="Rhea" id="RHEA-COMP:9667"/>
        <dbReference type="Rhea" id="RHEA-COMP:9698"/>
        <dbReference type="ChEBI" id="CHEBI:30616"/>
        <dbReference type="ChEBI" id="CHEBI:33019"/>
        <dbReference type="ChEBI" id="CHEBI:57844"/>
        <dbReference type="ChEBI" id="CHEBI:78442"/>
        <dbReference type="ChEBI" id="CHEBI:78530"/>
        <dbReference type="ChEBI" id="CHEBI:456215"/>
        <dbReference type="EC" id="6.1.1.10"/>
    </reaction>
</comment>
<comment type="cofactor">
    <cofactor evidence="1">
        <name>Zn(2+)</name>
        <dbReference type="ChEBI" id="CHEBI:29105"/>
    </cofactor>
    <text evidence="1">Binds 1 zinc ion per subunit.</text>
</comment>
<comment type="subunit">
    <text evidence="1">Monomer.</text>
</comment>
<comment type="subcellular location">
    <subcellularLocation>
        <location evidence="1">Cytoplasm</location>
    </subcellularLocation>
</comment>
<comment type="similarity">
    <text evidence="1">Belongs to the class-I aminoacyl-tRNA synthetase family. MetG type 1 subfamily.</text>
</comment>
<reference key="1">
    <citation type="journal article" date="2007" name="Microbiology">
        <title>Comparative analysis of the Corynebacterium glutamicum group and complete genome sequence of strain R.</title>
        <authorList>
            <person name="Yukawa H."/>
            <person name="Omumasaba C.A."/>
            <person name="Nonaka H."/>
            <person name="Kos P."/>
            <person name="Okai N."/>
            <person name="Suzuki N."/>
            <person name="Suda M."/>
            <person name="Tsuge Y."/>
            <person name="Watanabe J."/>
            <person name="Ikeda Y."/>
            <person name="Vertes A.A."/>
            <person name="Inui M."/>
        </authorList>
    </citation>
    <scope>NUCLEOTIDE SEQUENCE [LARGE SCALE GENOMIC DNA]</scope>
    <source>
        <strain>R</strain>
    </source>
</reference>
<feature type="chain" id="PRO_0000331807" description="Methionine--tRNA ligase">
    <location>
        <begin position="1"/>
        <end position="610"/>
    </location>
</feature>
<feature type="short sequence motif" description="'HIGH' region">
    <location>
        <begin position="12"/>
        <end position="22"/>
    </location>
</feature>
<feature type="short sequence motif" description="'KMSKS' region">
    <location>
        <begin position="348"/>
        <end position="352"/>
    </location>
</feature>
<feature type="binding site" evidence="1">
    <location>
        <position position="144"/>
    </location>
    <ligand>
        <name>Zn(2+)</name>
        <dbReference type="ChEBI" id="CHEBI:29105"/>
    </ligand>
</feature>
<feature type="binding site" evidence="1">
    <location>
        <position position="147"/>
    </location>
    <ligand>
        <name>Zn(2+)</name>
        <dbReference type="ChEBI" id="CHEBI:29105"/>
    </ligand>
</feature>
<feature type="binding site" evidence="1">
    <location>
        <position position="157"/>
    </location>
    <ligand>
        <name>Zn(2+)</name>
        <dbReference type="ChEBI" id="CHEBI:29105"/>
    </ligand>
</feature>
<feature type="binding site" evidence="1">
    <location>
        <position position="160"/>
    </location>
    <ligand>
        <name>Zn(2+)</name>
        <dbReference type="ChEBI" id="CHEBI:29105"/>
    </ligand>
</feature>
<feature type="binding site" evidence="1">
    <location>
        <position position="351"/>
    </location>
    <ligand>
        <name>ATP</name>
        <dbReference type="ChEBI" id="CHEBI:30616"/>
    </ligand>
</feature>
<name>SYM_CORGB</name>
<proteinExistence type="inferred from homology"/>
<dbReference type="EC" id="6.1.1.10" evidence="1"/>
<dbReference type="EMBL" id="AP009044">
    <property type="protein sequence ID" value="BAF53982.1"/>
    <property type="molecule type" value="Genomic_DNA"/>
</dbReference>
<dbReference type="RefSeq" id="WP_003858482.1">
    <property type="nucleotide sequence ID" value="NC_009342.1"/>
</dbReference>
<dbReference type="SMR" id="A4QCN5"/>
<dbReference type="KEGG" id="cgt:cgR_1006"/>
<dbReference type="HOGENOM" id="CLU_009710_1_2_11"/>
<dbReference type="PhylomeDB" id="A4QCN5"/>
<dbReference type="Proteomes" id="UP000006698">
    <property type="component" value="Chromosome"/>
</dbReference>
<dbReference type="GO" id="GO:0005829">
    <property type="term" value="C:cytosol"/>
    <property type="evidence" value="ECO:0007669"/>
    <property type="project" value="TreeGrafter"/>
</dbReference>
<dbReference type="GO" id="GO:0005524">
    <property type="term" value="F:ATP binding"/>
    <property type="evidence" value="ECO:0007669"/>
    <property type="project" value="UniProtKB-UniRule"/>
</dbReference>
<dbReference type="GO" id="GO:0046872">
    <property type="term" value="F:metal ion binding"/>
    <property type="evidence" value="ECO:0007669"/>
    <property type="project" value="UniProtKB-KW"/>
</dbReference>
<dbReference type="GO" id="GO:0004825">
    <property type="term" value="F:methionine-tRNA ligase activity"/>
    <property type="evidence" value="ECO:0007669"/>
    <property type="project" value="UniProtKB-UniRule"/>
</dbReference>
<dbReference type="GO" id="GO:0006431">
    <property type="term" value="P:methionyl-tRNA aminoacylation"/>
    <property type="evidence" value="ECO:0007669"/>
    <property type="project" value="UniProtKB-UniRule"/>
</dbReference>
<dbReference type="CDD" id="cd07957">
    <property type="entry name" value="Anticodon_Ia_Met"/>
    <property type="match status" value="1"/>
</dbReference>
<dbReference type="CDD" id="cd00814">
    <property type="entry name" value="MetRS_core"/>
    <property type="match status" value="1"/>
</dbReference>
<dbReference type="FunFam" id="2.20.28.20:FF:000001">
    <property type="entry name" value="Methionine--tRNA ligase"/>
    <property type="match status" value="1"/>
</dbReference>
<dbReference type="Gene3D" id="3.40.50.620">
    <property type="entry name" value="HUPs"/>
    <property type="match status" value="1"/>
</dbReference>
<dbReference type="Gene3D" id="1.10.730.10">
    <property type="entry name" value="Isoleucyl-tRNA Synthetase, Domain 1"/>
    <property type="match status" value="1"/>
</dbReference>
<dbReference type="Gene3D" id="2.20.28.20">
    <property type="entry name" value="Methionyl-tRNA synthetase, Zn-domain"/>
    <property type="match status" value="1"/>
</dbReference>
<dbReference type="HAMAP" id="MF_00098">
    <property type="entry name" value="Met_tRNA_synth_type1"/>
    <property type="match status" value="1"/>
</dbReference>
<dbReference type="InterPro" id="IPR041872">
    <property type="entry name" value="Anticodon_Met"/>
</dbReference>
<dbReference type="InterPro" id="IPR023458">
    <property type="entry name" value="Met-tRNA_ligase_1"/>
</dbReference>
<dbReference type="InterPro" id="IPR014758">
    <property type="entry name" value="Met-tRNA_synth"/>
</dbReference>
<dbReference type="InterPro" id="IPR015413">
    <property type="entry name" value="Methionyl/Leucyl_tRNA_Synth"/>
</dbReference>
<dbReference type="InterPro" id="IPR033911">
    <property type="entry name" value="MetRS_core"/>
</dbReference>
<dbReference type="InterPro" id="IPR029038">
    <property type="entry name" value="MetRS_Zn"/>
</dbReference>
<dbReference type="InterPro" id="IPR014729">
    <property type="entry name" value="Rossmann-like_a/b/a_fold"/>
</dbReference>
<dbReference type="InterPro" id="IPR009080">
    <property type="entry name" value="tRNAsynth_Ia_anticodon-bd"/>
</dbReference>
<dbReference type="NCBIfam" id="TIGR00398">
    <property type="entry name" value="metG"/>
    <property type="match status" value="1"/>
</dbReference>
<dbReference type="PANTHER" id="PTHR45765">
    <property type="entry name" value="METHIONINE--TRNA LIGASE"/>
    <property type="match status" value="1"/>
</dbReference>
<dbReference type="PANTHER" id="PTHR45765:SF1">
    <property type="entry name" value="METHIONINE--TRNA LIGASE, CYTOPLASMIC"/>
    <property type="match status" value="1"/>
</dbReference>
<dbReference type="Pfam" id="PF19303">
    <property type="entry name" value="Anticodon_3"/>
    <property type="match status" value="1"/>
</dbReference>
<dbReference type="Pfam" id="PF09334">
    <property type="entry name" value="tRNA-synt_1g"/>
    <property type="match status" value="1"/>
</dbReference>
<dbReference type="PRINTS" id="PR01041">
    <property type="entry name" value="TRNASYNTHMET"/>
</dbReference>
<dbReference type="SUPFAM" id="SSF47323">
    <property type="entry name" value="Anticodon-binding domain of a subclass of class I aminoacyl-tRNA synthetases"/>
    <property type="match status" value="1"/>
</dbReference>
<dbReference type="SUPFAM" id="SSF57770">
    <property type="entry name" value="Methionyl-tRNA synthetase (MetRS), Zn-domain"/>
    <property type="match status" value="1"/>
</dbReference>
<dbReference type="SUPFAM" id="SSF52374">
    <property type="entry name" value="Nucleotidylyl transferase"/>
    <property type="match status" value="1"/>
</dbReference>